<gene>
    <name evidence="2" type="primary">PYGL</name>
</gene>
<dbReference type="EC" id="2.4.1.1" evidence="2"/>
<dbReference type="EMBL" id="BC120097">
    <property type="protein sequence ID" value="AAI20098.1"/>
    <property type="molecule type" value="mRNA"/>
</dbReference>
<dbReference type="RefSeq" id="NP_001068671.1">
    <property type="nucleotide sequence ID" value="NM_001075203.2"/>
</dbReference>
<dbReference type="RefSeq" id="XP_005211715.1">
    <property type="nucleotide sequence ID" value="XM_005211658.4"/>
</dbReference>
<dbReference type="SMR" id="Q0VCM4"/>
<dbReference type="FunCoup" id="Q0VCM4">
    <property type="interactions" value="1312"/>
</dbReference>
<dbReference type="STRING" id="9913.ENSBTAP00000063715"/>
<dbReference type="CAZy" id="GT35">
    <property type="family name" value="Glycosyltransferase Family 35"/>
</dbReference>
<dbReference type="PaxDb" id="9913-ENSBTAP00000015277"/>
<dbReference type="PeptideAtlas" id="Q0VCM4"/>
<dbReference type="Ensembl" id="ENSBTAT00000080533.2">
    <property type="protein sequence ID" value="ENSBTAP00000062385.2"/>
    <property type="gene ID" value="ENSBTAG00000011494.6"/>
</dbReference>
<dbReference type="GeneID" id="505472"/>
<dbReference type="KEGG" id="bta:505472"/>
<dbReference type="CTD" id="5836"/>
<dbReference type="VEuPathDB" id="HostDB:ENSBTAG00000011494"/>
<dbReference type="VGNC" id="VGNC:33588">
    <property type="gene designation" value="PYGL"/>
</dbReference>
<dbReference type="eggNOG" id="KOG2099">
    <property type="taxonomic scope" value="Eukaryota"/>
</dbReference>
<dbReference type="GeneTree" id="ENSGT00950000183148"/>
<dbReference type="HOGENOM" id="CLU_010198_1_1_1"/>
<dbReference type="InParanoid" id="Q0VCM4"/>
<dbReference type="OMA" id="HCACSVA"/>
<dbReference type="OrthoDB" id="9215500at2759"/>
<dbReference type="TreeFam" id="TF300309"/>
<dbReference type="Reactome" id="R-BTA-6798695">
    <property type="pathway name" value="Neutrophil degranulation"/>
</dbReference>
<dbReference type="Reactome" id="R-BTA-70221">
    <property type="pathway name" value="Glycogen breakdown (glycogenolysis)"/>
</dbReference>
<dbReference type="Proteomes" id="UP000009136">
    <property type="component" value="Chromosome 10"/>
</dbReference>
<dbReference type="Bgee" id="ENSBTAG00000011494">
    <property type="expression patterns" value="Expressed in parenchyma of mammary gland and 103 other cell types or tissues"/>
</dbReference>
<dbReference type="GO" id="GO:0005737">
    <property type="term" value="C:cytoplasm"/>
    <property type="evidence" value="ECO:0000318"/>
    <property type="project" value="GO_Central"/>
</dbReference>
<dbReference type="GO" id="GO:0005829">
    <property type="term" value="C:cytosol"/>
    <property type="evidence" value="ECO:0007669"/>
    <property type="project" value="UniProtKB-SubCell"/>
</dbReference>
<dbReference type="GO" id="GO:0008184">
    <property type="term" value="F:glycogen phosphorylase activity"/>
    <property type="evidence" value="ECO:0000318"/>
    <property type="project" value="GO_Central"/>
</dbReference>
<dbReference type="GO" id="GO:0000166">
    <property type="term" value="F:nucleotide binding"/>
    <property type="evidence" value="ECO:0007669"/>
    <property type="project" value="UniProtKB-KW"/>
</dbReference>
<dbReference type="GO" id="GO:0030170">
    <property type="term" value="F:pyridoxal phosphate binding"/>
    <property type="evidence" value="ECO:0000318"/>
    <property type="project" value="GO_Central"/>
</dbReference>
<dbReference type="GO" id="GO:0005980">
    <property type="term" value="P:glycogen catabolic process"/>
    <property type="evidence" value="ECO:0000318"/>
    <property type="project" value="GO_Central"/>
</dbReference>
<dbReference type="CDD" id="cd04300">
    <property type="entry name" value="GT35_Glycogen_Phosphorylase"/>
    <property type="match status" value="1"/>
</dbReference>
<dbReference type="FunFam" id="3.40.50.2000:FF:000005">
    <property type="entry name" value="Alpha-1,4 glucan phosphorylase"/>
    <property type="match status" value="1"/>
</dbReference>
<dbReference type="FunFam" id="3.40.50.2000:FF:000153">
    <property type="entry name" value="Alpha-1,4 glucan phosphorylase"/>
    <property type="match status" value="1"/>
</dbReference>
<dbReference type="Gene3D" id="3.40.50.2000">
    <property type="entry name" value="Glycogen Phosphorylase B"/>
    <property type="match status" value="2"/>
</dbReference>
<dbReference type="InterPro" id="IPR011833">
    <property type="entry name" value="Glycg_phsphrylas"/>
</dbReference>
<dbReference type="InterPro" id="IPR000811">
    <property type="entry name" value="Glyco_trans_35"/>
</dbReference>
<dbReference type="InterPro" id="IPR035090">
    <property type="entry name" value="Pyridoxal_P_attach_site"/>
</dbReference>
<dbReference type="NCBIfam" id="TIGR02093">
    <property type="entry name" value="P_ylase"/>
    <property type="match status" value="1"/>
</dbReference>
<dbReference type="PANTHER" id="PTHR11468">
    <property type="entry name" value="GLYCOGEN PHOSPHORYLASE"/>
    <property type="match status" value="1"/>
</dbReference>
<dbReference type="PANTHER" id="PTHR11468:SF3">
    <property type="entry name" value="GLYCOGEN PHOSPHORYLASE, LIVER FORM"/>
    <property type="match status" value="1"/>
</dbReference>
<dbReference type="Pfam" id="PF00343">
    <property type="entry name" value="Phosphorylase"/>
    <property type="match status" value="1"/>
</dbReference>
<dbReference type="PIRSF" id="PIRSF000460">
    <property type="entry name" value="Pprylas_GlgP"/>
    <property type="match status" value="1"/>
</dbReference>
<dbReference type="SUPFAM" id="SSF53756">
    <property type="entry name" value="UDP-Glycosyltransferase/glycogen phosphorylase"/>
    <property type="match status" value="1"/>
</dbReference>
<dbReference type="PROSITE" id="PS00102">
    <property type="entry name" value="PHOSPHORYLASE"/>
    <property type="match status" value="1"/>
</dbReference>
<reference key="1">
    <citation type="submission" date="2006-08" db="EMBL/GenBank/DDBJ databases">
        <authorList>
            <consortium name="NIH - Mammalian Gene Collection (MGC) project"/>
        </authorList>
    </citation>
    <scope>NUCLEOTIDE SEQUENCE [LARGE SCALE MRNA]</scope>
    <source>
        <strain>Hereford</strain>
        <tissue>Fetal liver</tissue>
    </source>
</reference>
<accession>Q0VCM4</accession>
<comment type="function">
    <text evidence="2">Allosteric enzyme that catalyzes the rate-limiting step in glycogen catabolism, the phosphorolytic cleavage of glycogen to produce glucose-1-phosphate, and plays a central role in maintaining cellular and organismal glucose homeostasis.</text>
</comment>
<comment type="catalytic activity">
    <reaction evidence="2">
        <text>[(1-&gt;4)-alpha-D-glucosyl](n) + phosphate = [(1-&gt;4)-alpha-D-glucosyl](n-1) + alpha-D-glucose 1-phosphate</text>
        <dbReference type="Rhea" id="RHEA:41732"/>
        <dbReference type="Rhea" id="RHEA-COMP:9584"/>
        <dbReference type="Rhea" id="RHEA-COMP:9586"/>
        <dbReference type="ChEBI" id="CHEBI:15444"/>
        <dbReference type="ChEBI" id="CHEBI:43474"/>
        <dbReference type="ChEBI" id="CHEBI:58601"/>
        <dbReference type="EC" id="2.4.1.1"/>
    </reaction>
    <physiologicalReaction direction="left-to-right" evidence="2">
        <dbReference type="Rhea" id="RHEA:41733"/>
    </physiologicalReaction>
</comment>
<comment type="cofactor">
    <cofactor evidence="2">
        <name>pyridoxal 5'-phosphate</name>
        <dbReference type="ChEBI" id="CHEBI:597326"/>
    </cofactor>
</comment>
<comment type="activity regulation">
    <text evidence="2">Allosterically regulated through the non-covalent binding of metabolites, being activated by AMP and inhibited by ATP, ADP, and glucose-6-phosphate. The activity is also controlled by post-translational modifications including phosphorylation and acetylation.</text>
</comment>
<comment type="subunit">
    <text evidence="2">Homodimer; enzymatically active. Interacts with PPP1R3B; recruits the phosphatase PP1 which dephosphorylates and inactivates PYGL/glycogen phosphorylase.</text>
</comment>
<comment type="subcellular location">
    <subcellularLocation>
        <location evidence="2">Cytoplasm</location>
        <location evidence="2">Cytosol</location>
    </subcellularLocation>
</comment>
<comment type="PTM">
    <text evidence="2">Acetylation, which is up-regulated by glucose and insulin and down-regulated by glucagon, inhibits the glycogen phosphorylase activity by promoting PPP1R3B-mediated recruitment of phosphatase PP1 and Ser-15 dephosphorylation.</text>
</comment>
<comment type="PTM">
    <text evidence="2">Phosphorylation at Ser-15 converts inactive phosphorylase b into active phosphorylase a. Dephosphorylation of Ser-15 by phosphatase PP1 inactivates the enzyme.</text>
</comment>
<comment type="similarity">
    <text evidence="5">Belongs to the glycogen phosphorylase family.</text>
</comment>
<evidence type="ECO:0000250" key="1">
    <source>
        <dbReference type="UniProtKB" id="P00489"/>
    </source>
</evidence>
<evidence type="ECO:0000250" key="2">
    <source>
        <dbReference type="UniProtKB" id="P06737"/>
    </source>
</evidence>
<evidence type="ECO:0000250" key="3">
    <source>
        <dbReference type="UniProtKB" id="P09811"/>
    </source>
</evidence>
<evidence type="ECO:0000250" key="4">
    <source>
        <dbReference type="UniProtKB" id="Q9ET01"/>
    </source>
</evidence>
<evidence type="ECO:0000305" key="5"/>
<keyword id="KW-0007">Acetylation</keyword>
<keyword id="KW-0021">Allosteric enzyme</keyword>
<keyword id="KW-0119">Carbohydrate metabolism</keyword>
<keyword id="KW-0963">Cytoplasm</keyword>
<keyword id="KW-0321">Glycogen metabolism</keyword>
<keyword id="KW-0328">Glycosyltransferase</keyword>
<keyword id="KW-0547">Nucleotide-binding</keyword>
<keyword id="KW-0597">Phosphoprotein</keyword>
<keyword id="KW-0663">Pyridoxal phosphate</keyword>
<keyword id="KW-1185">Reference proteome</keyword>
<keyword id="KW-0808">Transferase</keyword>
<feature type="initiator methionine" description="Removed" evidence="2">
    <location>
        <position position="1"/>
    </location>
</feature>
<feature type="chain" id="PRO_0000272607" description="Glycogen phosphorylase, liver form">
    <location>
        <begin position="2"/>
        <end position="851"/>
    </location>
</feature>
<feature type="binding site" evidence="2">
    <location>
        <begin position="43"/>
        <end position="45"/>
    </location>
    <ligand>
        <name>AMP</name>
        <dbReference type="ChEBI" id="CHEBI:456215"/>
    </ligand>
</feature>
<feature type="binding site" evidence="2">
    <location>
        <position position="76"/>
    </location>
    <ligand>
        <name>AMP</name>
        <dbReference type="ChEBI" id="CHEBI:456215"/>
    </ligand>
</feature>
<feature type="binding site" evidence="2">
    <location>
        <position position="310"/>
    </location>
    <ligand>
        <name>AMP</name>
        <dbReference type="ChEBI" id="CHEBI:456215"/>
    </ligand>
</feature>
<feature type="site" description="Involved in the association of subunits" evidence="1">
    <location>
        <position position="109"/>
    </location>
</feature>
<feature type="site" description="Involved in the association of subunits" evidence="1">
    <location>
        <position position="143"/>
    </location>
</feature>
<feature type="site" description="May be involved in allosteric control" evidence="1">
    <location>
        <position position="156"/>
    </location>
</feature>
<feature type="modified residue" description="N-acetylalanine" evidence="2">
    <location>
        <position position="2"/>
    </location>
</feature>
<feature type="modified residue" description="Phosphoserine; by PHK; in form phosphorylase a" evidence="2">
    <location>
        <position position="15"/>
    </location>
</feature>
<feature type="modified residue" description="N6-succinyllysine" evidence="4">
    <location>
        <position position="364"/>
    </location>
</feature>
<feature type="modified residue" description="N6-acetyllysine" evidence="2">
    <location>
        <position position="470"/>
    </location>
</feature>
<feature type="modified residue" description="Phosphoserine" evidence="4">
    <location>
        <position position="524"/>
    </location>
</feature>
<feature type="modified residue" description="Phosphoserine" evidence="3">
    <location>
        <position position="561"/>
    </location>
</feature>
<feature type="modified residue" description="Phosphoserine" evidence="2">
    <location>
        <position position="639"/>
    </location>
</feature>
<feature type="modified residue" description="N6-(pyridoxal phosphate)lysine" evidence="2">
    <location>
        <position position="681"/>
    </location>
</feature>
<feature type="modified residue" description="N6-acetyllysine" evidence="2">
    <location>
        <position position="796"/>
    </location>
</feature>
<proteinExistence type="evidence at transcript level"/>
<name>PYGL_BOVIN</name>
<sequence>MAKPLTDQEKRRQISIRGIVGVENVAELKKGFNRHLHFTLVKDRNVATPRDYFFALAHTVRDHLVGRWIRTQQYYYEKCPKRVYYLSLEFYMGRTLQNTMINLGLQNACDEAIYQLGLDMEELEEIEEDAGLGNGGLGRLAACFLDSMATLGLAAYGYGIRYEYGIFNQKIRDGWQIEEADDWLRHGNPWEKARPEFMLPVHFYGRVEHTEAGTKWTDTQVVLALPYDTPVPGYLNNTVNTMRLWSARAPNDFNLRDFNVGDYIQAVLDRNLAENISRVLYPNDNFFEGKELRLKQEYFVVAATLQDVIRRFKASKFDSSNSTKTAFDAFPDQVAIQLNDTHPSLAIPELMRIFVDIEKLPWSKAWEITQKTFAYTNHTVLPEALERWPVELVEKLLPRHLQIIYEINQKHLDKIAALFPKDVDRLRRMSLIEEEGGKRINMAHLCIVGSHAVNGVAKIHSDIVKTQVFKDFSELEPDKFQNKTNGITPRRWLLLCNPGLAELIAEKIGEDYVKDLSQLTKLNSFLGDDIFLREISNVKQENKLKFSQFLEKEYKVKINPSSMFDVQVKRIHEYKRQLLNCLHVVTMYNRIKKDPKKLFVPRTVIIGGKAAPGYYMAKLIIKLITSVAEVVNNDPVVGSKLKLIFLENYRVSLAEKVIPATDLSEQISTAGTEASGTGNMKFMLNGALTIGTMDGANVEMAEEAGEENLFIFGMRIEDVAALDKKGYEAKEYYEALPELKLAIDQIDKGFFSPKQPDLFKDLVNMLFYHDRFKVFADYEAYVKCQEKVSQLYMNPKAWNIMVLKNIAASGKFSSDRTIKEYARDIWNMEPSDIKISLSSDPSGGANKANGK</sequence>
<organism>
    <name type="scientific">Bos taurus</name>
    <name type="common">Bovine</name>
    <dbReference type="NCBI Taxonomy" id="9913"/>
    <lineage>
        <taxon>Eukaryota</taxon>
        <taxon>Metazoa</taxon>
        <taxon>Chordata</taxon>
        <taxon>Craniata</taxon>
        <taxon>Vertebrata</taxon>
        <taxon>Euteleostomi</taxon>
        <taxon>Mammalia</taxon>
        <taxon>Eutheria</taxon>
        <taxon>Laurasiatheria</taxon>
        <taxon>Artiodactyla</taxon>
        <taxon>Ruminantia</taxon>
        <taxon>Pecora</taxon>
        <taxon>Bovidae</taxon>
        <taxon>Bovinae</taxon>
        <taxon>Bos</taxon>
    </lineage>
</organism>
<protein>
    <recommendedName>
        <fullName evidence="2">Glycogen phosphorylase, liver form</fullName>
        <ecNumber evidence="2">2.4.1.1</ecNumber>
    </recommendedName>
</protein>